<organism>
    <name type="scientific">Stylosanthes humilis</name>
    <name type="common">Townsville stylo</name>
    <name type="synonym">Astyposanthes humilis</name>
    <dbReference type="NCBI Taxonomy" id="35628"/>
    <lineage>
        <taxon>Eukaryota</taxon>
        <taxon>Viridiplantae</taxon>
        <taxon>Streptophyta</taxon>
        <taxon>Embryophyta</taxon>
        <taxon>Tracheophyta</taxon>
        <taxon>Spermatophyta</taxon>
        <taxon>Magnoliopsida</taxon>
        <taxon>eudicotyledons</taxon>
        <taxon>Gunneridae</taxon>
        <taxon>Pentapetalae</taxon>
        <taxon>rosids</taxon>
        <taxon>fabids</taxon>
        <taxon>Fabales</taxon>
        <taxon>Fabaceae</taxon>
        <taxon>Papilionoideae</taxon>
        <taxon>50 kb inversion clade</taxon>
        <taxon>dalbergioids sensu lato</taxon>
        <taxon>Dalbergieae</taxon>
        <taxon>Pterocarpus clade</taxon>
        <taxon>Stylosanthes</taxon>
    </lineage>
</organism>
<comment type="function">
    <text evidence="1">Oxidizes mannitol to mannose. Provides the initial step by which translocated mannitol is committed to central metabolism and, by regulating mannitol pool size, is important in regulating salt tolerance at the cellular level (By similarity).</text>
</comment>
<comment type="catalytic activity">
    <reaction>
        <text>D-mannitol + NAD(+) = D-mannose + NADH + H(+)</text>
        <dbReference type="Rhea" id="RHEA:15029"/>
        <dbReference type="ChEBI" id="CHEBI:4208"/>
        <dbReference type="ChEBI" id="CHEBI:15378"/>
        <dbReference type="ChEBI" id="CHEBI:16899"/>
        <dbReference type="ChEBI" id="CHEBI:57540"/>
        <dbReference type="ChEBI" id="CHEBI:57945"/>
        <dbReference type="EC" id="1.1.1.255"/>
    </reaction>
</comment>
<comment type="cofactor">
    <cofactor evidence="1">
        <name>Zn(2+)</name>
        <dbReference type="ChEBI" id="CHEBI:29105"/>
    </cofactor>
    <text evidence="1">Binds 2 Zn(2+) ions per subunit.</text>
</comment>
<comment type="similarity">
    <text evidence="2">Belongs to the zinc-containing alcohol dehydrogenase family.</text>
</comment>
<comment type="caution">
    <text evidence="2">Was originally (Ref.1) thought to be a cinnamyl-alcohol dehydrogenase.</text>
</comment>
<accession>Q43138</accession>
<evidence type="ECO:0000250" key="1"/>
<evidence type="ECO:0000305" key="2"/>
<feature type="chain" id="PRO_0000160816" description="Probable mannitol dehydrogenase 3">
    <location>
        <begin position="1"/>
        <end position="363"/>
    </location>
</feature>
<feature type="binding site" evidence="1">
    <location>
        <position position="51"/>
    </location>
    <ligand>
        <name>Zn(2+)</name>
        <dbReference type="ChEBI" id="CHEBI:29105"/>
        <label>1</label>
        <note>catalytic</note>
    </ligand>
</feature>
<feature type="binding site" evidence="1">
    <location>
        <position position="73"/>
    </location>
    <ligand>
        <name>Zn(2+)</name>
        <dbReference type="ChEBI" id="CHEBI:29105"/>
        <label>1</label>
        <note>catalytic</note>
    </ligand>
</feature>
<feature type="binding site" evidence="1">
    <location>
        <position position="104"/>
    </location>
    <ligand>
        <name>Zn(2+)</name>
        <dbReference type="ChEBI" id="CHEBI:29105"/>
        <label>2</label>
    </ligand>
</feature>
<feature type="binding site" evidence="1">
    <location>
        <position position="107"/>
    </location>
    <ligand>
        <name>Zn(2+)</name>
        <dbReference type="ChEBI" id="CHEBI:29105"/>
        <label>2</label>
    </ligand>
</feature>
<feature type="binding site" evidence="1">
    <location>
        <position position="110"/>
    </location>
    <ligand>
        <name>Zn(2+)</name>
        <dbReference type="ChEBI" id="CHEBI:29105"/>
        <label>2</label>
    </ligand>
</feature>
<feature type="binding site" evidence="1">
    <location>
        <position position="118"/>
    </location>
    <ligand>
        <name>Zn(2+)</name>
        <dbReference type="ChEBI" id="CHEBI:29105"/>
        <label>2</label>
    </ligand>
</feature>
<feature type="binding site" evidence="1">
    <location>
        <position position="168"/>
    </location>
    <ligand>
        <name>Zn(2+)</name>
        <dbReference type="ChEBI" id="CHEBI:29105"/>
        <label>1</label>
        <note>catalytic</note>
    </ligand>
</feature>
<protein>
    <recommendedName>
        <fullName>Probable mannitol dehydrogenase 3</fullName>
        <ecNumber>1.1.1.255</ecNumber>
    </recommendedName>
    <alternativeName>
        <fullName>NAD-dependent mannitol dehydrogenase 3</fullName>
    </alternativeName>
</protein>
<dbReference type="EC" id="1.1.1.255"/>
<dbReference type="EMBL" id="L36456">
    <property type="protein sequence ID" value="AAA74883.1"/>
    <property type="molecule type" value="mRNA"/>
</dbReference>
<dbReference type="SMR" id="Q43138"/>
<dbReference type="GO" id="GO:0046029">
    <property type="term" value="F:mannitol dehydrogenase activity"/>
    <property type="evidence" value="ECO:0007669"/>
    <property type="project" value="UniProtKB-EC"/>
</dbReference>
<dbReference type="GO" id="GO:0008270">
    <property type="term" value="F:zinc ion binding"/>
    <property type="evidence" value="ECO:0007669"/>
    <property type="project" value="InterPro"/>
</dbReference>
<dbReference type="GO" id="GO:0009809">
    <property type="term" value="P:lignin biosynthetic process"/>
    <property type="evidence" value="ECO:0007669"/>
    <property type="project" value="UniProtKB-ARBA"/>
</dbReference>
<dbReference type="CDD" id="cd05283">
    <property type="entry name" value="CAD1"/>
    <property type="match status" value="1"/>
</dbReference>
<dbReference type="FunFam" id="3.40.50.720:FF:000022">
    <property type="entry name" value="Cinnamyl alcohol dehydrogenase"/>
    <property type="match status" value="1"/>
</dbReference>
<dbReference type="FunFam" id="3.90.180.10:FF:000100">
    <property type="entry name" value="Putative cinnamyl alcohol dehydrogenase 6"/>
    <property type="match status" value="1"/>
</dbReference>
<dbReference type="FunFam" id="3.90.180.10:FF:000126">
    <property type="entry name" value="Uncharacterized protein"/>
    <property type="match status" value="1"/>
</dbReference>
<dbReference type="Gene3D" id="3.90.180.10">
    <property type="entry name" value="Medium-chain alcohol dehydrogenases, catalytic domain"/>
    <property type="match status" value="1"/>
</dbReference>
<dbReference type="Gene3D" id="3.40.50.720">
    <property type="entry name" value="NAD(P)-binding Rossmann-like Domain"/>
    <property type="match status" value="1"/>
</dbReference>
<dbReference type="InterPro" id="IPR013149">
    <property type="entry name" value="ADH-like_C"/>
</dbReference>
<dbReference type="InterPro" id="IPR013154">
    <property type="entry name" value="ADH-like_N"/>
</dbReference>
<dbReference type="InterPro" id="IPR002328">
    <property type="entry name" value="ADH_Zn_CS"/>
</dbReference>
<dbReference type="InterPro" id="IPR047109">
    <property type="entry name" value="CAD-like"/>
</dbReference>
<dbReference type="InterPro" id="IPR011032">
    <property type="entry name" value="GroES-like_sf"/>
</dbReference>
<dbReference type="InterPro" id="IPR036291">
    <property type="entry name" value="NAD(P)-bd_dom_sf"/>
</dbReference>
<dbReference type="InterPro" id="IPR020843">
    <property type="entry name" value="PKS_ER"/>
</dbReference>
<dbReference type="PANTHER" id="PTHR42683">
    <property type="entry name" value="ALDEHYDE REDUCTASE"/>
    <property type="match status" value="1"/>
</dbReference>
<dbReference type="Pfam" id="PF08240">
    <property type="entry name" value="ADH_N"/>
    <property type="match status" value="1"/>
</dbReference>
<dbReference type="Pfam" id="PF00107">
    <property type="entry name" value="ADH_zinc_N"/>
    <property type="match status" value="1"/>
</dbReference>
<dbReference type="SMART" id="SM00829">
    <property type="entry name" value="PKS_ER"/>
    <property type="match status" value="1"/>
</dbReference>
<dbReference type="SUPFAM" id="SSF50129">
    <property type="entry name" value="GroES-like"/>
    <property type="match status" value="1"/>
</dbReference>
<dbReference type="SUPFAM" id="SSF51735">
    <property type="entry name" value="NAD(P)-binding Rossmann-fold domains"/>
    <property type="match status" value="1"/>
</dbReference>
<dbReference type="PROSITE" id="PS00059">
    <property type="entry name" value="ADH_ZINC"/>
    <property type="match status" value="1"/>
</dbReference>
<keyword id="KW-0479">Metal-binding</keyword>
<keyword id="KW-0520">NAD</keyword>
<keyword id="KW-0560">Oxidoreductase</keyword>
<keyword id="KW-0862">Zinc</keyword>
<gene>
    <name type="primary">CAD3</name>
</gene>
<sequence>MEASQVEFEHPRKAFGWAARDSSGLLSPFNFSRRDIGEEDVALEVLYCGICHTDLHMAKNDFGNSIYPYVPGHEVIGIVAEVGSKVEKYKVGDKVGVGYFVESCRSCQNCIDNLENYCPKHILTQGDKHIDGTTTYGGYSDSMVVDEHFVTRIPEGLPLDGCGSSSLCWGYSHSPLKYYGLDKPGLHVGVVGLGGLGHMVAKFAKTHGLKITVISTSPPTKKEEAIKNLGADSFLVSRDPDQMEAPKETLDGIIDTVSADHSIVPLIGLLKSHGKLVLIGAIEKPLELPPFPLILGRKLVGGTLVGGLKETQEMIDFSPKHNVKPEIEVVPMDYVNIAMQRLAKADVKYRFVIDVANTLKPTS</sequence>
<reference key="1">
    <citation type="submission" date="1994-11" db="EMBL/GenBank/DDBJ databases">
        <authorList>
            <person name="Nourse J.P."/>
            <person name="Manners J.M."/>
            <person name="Curtis M.D."/>
            <person name="Abrahams S.L."/>
            <person name="Watson J.M."/>
        </authorList>
    </citation>
    <scope>NUCLEOTIDE SEQUENCE [MRNA]</scope>
    <source>
        <strain>cv. Paterson</strain>
        <tissue>Stem</tissue>
    </source>
</reference>
<name>MTDH3_STYHU</name>
<proteinExistence type="evidence at transcript level"/>